<evidence type="ECO:0000250" key="1">
    <source>
        <dbReference type="UniProtKB" id="C8VQG9"/>
    </source>
</evidence>
<evidence type="ECO:0000250" key="2">
    <source>
        <dbReference type="UniProtKB" id="C8VTV4"/>
    </source>
</evidence>
<evidence type="ECO:0000255" key="3">
    <source>
        <dbReference type="PROSITE-ProRule" id="PRU01165"/>
    </source>
</evidence>
<evidence type="ECO:0000256" key="4">
    <source>
        <dbReference type="SAM" id="MobiDB-lite"/>
    </source>
</evidence>
<evidence type="ECO:0000269" key="5">
    <source>
    </source>
</evidence>
<evidence type="ECO:0000303" key="6">
    <source>
    </source>
</evidence>
<evidence type="ECO:0000305" key="7"/>
<dbReference type="EMBL" id="EU543494">
    <property type="protein sequence ID" value="ACB59235.1"/>
    <property type="molecule type" value="Genomic_DNA"/>
</dbReference>
<dbReference type="SMR" id="B2CQJ9"/>
<dbReference type="PHI-base" id="PHI:2588"/>
<dbReference type="PHI-base" id="PHI:2609"/>
<dbReference type="GO" id="GO:0005737">
    <property type="term" value="C:cytoplasm"/>
    <property type="evidence" value="ECO:0007669"/>
    <property type="project" value="UniProtKB-SubCell"/>
</dbReference>
<dbReference type="GO" id="GO:0005634">
    <property type="term" value="C:nucleus"/>
    <property type="evidence" value="ECO:0007669"/>
    <property type="project" value="UniProtKB-SubCell"/>
</dbReference>
<dbReference type="GO" id="GO:0030435">
    <property type="term" value="P:sporulation resulting in formation of a cellular spore"/>
    <property type="evidence" value="ECO:0007669"/>
    <property type="project" value="UniProtKB-KW"/>
</dbReference>
<dbReference type="FunFam" id="2.60.40.3960:FF:000001">
    <property type="entry name" value="Sexual development activator VeA"/>
    <property type="match status" value="1"/>
</dbReference>
<dbReference type="Gene3D" id="2.60.40.3960">
    <property type="entry name" value="Velvet domain"/>
    <property type="match status" value="1"/>
</dbReference>
<dbReference type="InterPro" id="IPR021740">
    <property type="entry name" value="Velvet"/>
</dbReference>
<dbReference type="InterPro" id="IPR037525">
    <property type="entry name" value="Velvet_dom"/>
</dbReference>
<dbReference type="InterPro" id="IPR038491">
    <property type="entry name" value="Velvet_dom_sf"/>
</dbReference>
<dbReference type="PANTHER" id="PTHR33572:SF14">
    <property type="entry name" value="DEVELOPMENTAL AND SECONDARY METABOLISM REGULATOR VEA"/>
    <property type="match status" value="1"/>
</dbReference>
<dbReference type="PANTHER" id="PTHR33572">
    <property type="entry name" value="SPORE DEVELOPMENT REGULATOR VOSA"/>
    <property type="match status" value="1"/>
</dbReference>
<dbReference type="Pfam" id="PF11754">
    <property type="entry name" value="Velvet"/>
    <property type="match status" value="2"/>
</dbReference>
<dbReference type="PROSITE" id="PS51821">
    <property type="entry name" value="VELVET"/>
    <property type="match status" value="1"/>
</dbReference>
<keyword id="KW-0963">Cytoplasm</keyword>
<keyword id="KW-0539">Nucleus</keyword>
<keyword id="KW-0749">Sporulation</keyword>
<keyword id="KW-0804">Transcription</keyword>
<keyword id="KW-0805">Transcription regulation</keyword>
<reference key="1">
    <citation type="journal article" date="2008" name="Proc. Natl. Acad. Sci. U.S.A.">
        <title>Conserved factors Ryp2 and Ryp3 control cell morphology and infectious spore formation in the fungal pathogen Histoplasma capsulatum.</title>
        <authorList>
            <person name="Webster R.H."/>
            <person name="Sil A."/>
        </authorList>
    </citation>
    <scope>NUCLEOTIDE SEQUENCE [GENOMIC DNA]</scope>
    <source>
        <strain>ATCC 26032 / G217B</strain>
    </source>
</reference>
<reference key="2">
    <citation type="journal article" date="2012" name="Fungal Genet. Biol.">
        <title>VEA1 is required for cleistothecial formation and virulence in Histoplasma capsulatum.</title>
        <authorList>
            <person name="Laskowski-Peak M.C."/>
            <person name="Calvo A.M."/>
            <person name="Rohrssen J."/>
            <person name="Smulian A.G."/>
        </authorList>
    </citation>
    <scope>FUNCTION</scope>
    <scope>DISRUPTION PHENOTYPE</scope>
</reference>
<protein>
    <recommendedName>
        <fullName evidence="7">Developmental and secondary metabolism regulator VEA1</fullName>
    </recommendedName>
    <alternativeName>
        <fullName evidence="7">Velvet complex subunit 1</fullName>
    </alternativeName>
</protein>
<accession>B2CQJ9</accession>
<proteinExistence type="inferred from homology"/>
<sequence>MATKASSILHPPNETEHTMSRITQEGKKLTYNLKVIQQPERARACGAGAKSSADRRPVDPPPVVELRVFESDLNDQHKTDITFSYNANFFLFATLEWARPIAHGRVQTQTPSCPVLTGVPVAGIAYLDRPTQAGYFIFPDLSVRHEGLYRLNFNLYEEMKEPKHADKGGLVPHSQNHMAPLTPSKPRSPHQFLHFRLVVKSVPFTVYSAKKFPGLAESTSLSRIVAEQGCRVRIRRDVRMRRREPKPNKDYGAYDDRRITPDPYPGTPVERPRSASNASMDDPYRYPTGPPQVQPSPDYGYHHPSHQQPSPNLAATPQSHLSFGAAPPQYHAPPPPPTAHPAPPPAYTSPHLGYTHTRQLSAGPEYDPHRQKYTQYPPPSPHSDIYDQSKSSLPMNPSVDHPSYPPMPYEQRMSDPKLYAPPSQLHPTQQYQQPTPPPPPPAAIAPHPPHQRTPTKPSPSTFFPPTPSRLSVEVDSSNEADDAILNAIRTRRGYILDEKSGATKRSRDSSDHDLKPLRNGQRPVVSGDEAAKGEIGETSGGSDDEIMTYRRADGRLVAKQRVSVHSKGKEVNIPRDVDLLPRRPEVCAVAE</sequence>
<organism>
    <name type="scientific">Ajellomyces capsulatus</name>
    <name type="common">Darling's disease fungus</name>
    <name type="synonym">Histoplasma capsulatum</name>
    <dbReference type="NCBI Taxonomy" id="5037"/>
    <lineage>
        <taxon>Eukaryota</taxon>
        <taxon>Fungi</taxon>
        <taxon>Dikarya</taxon>
        <taxon>Ascomycota</taxon>
        <taxon>Pezizomycotina</taxon>
        <taxon>Eurotiomycetes</taxon>
        <taxon>Eurotiomycetidae</taxon>
        <taxon>Onygenales</taxon>
        <taxon>Ajellomycetaceae</taxon>
        <taxon>Histoplasma</taxon>
    </lineage>
</organism>
<name>VEA_AJECA</name>
<feature type="chain" id="PRO_0000435773" description="Developmental and secondary metabolism regulator VEA1">
    <location>
        <begin position="1"/>
        <end position="591"/>
    </location>
</feature>
<feature type="domain" description="Velvet" evidence="3">
    <location>
        <begin position="26"/>
        <end position="235"/>
    </location>
</feature>
<feature type="region of interest" description="Disordered" evidence="4">
    <location>
        <begin position="1"/>
        <end position="22"/>
    </location>
</feature>
<feature type="region of interest" description="Disordered" evidence="4">
    <location>
        <begin position="238"/>
        <end position="547"/>
    </location>
</feature>
<feature type="region of interest" description="PEST" evidence="2">
    <location>
        <begin position="452"/>
        <end position="493"/>
    </location>
</feature>
<feature type="short sequence motif" description="Nuclear localization signal" evidence="2">
    <location>
        <begin position="40"/>
        <end position="45"/>
    </location>
</feature>
<feature type="compositionally biased region" description="Basic and acidic residues" evidence="4">
    <location>
        <begin position="13"/>
        <end position="22"/>
    </location>
</feature>
<feature type="compositionally biased region" description="Basic and acidic residues" evidence="4">
    <location>
        <begin position="245"/>
        <end position="260"/>
    </location>
</feature>
<feature type="compositionally biased region" description="Polar residues" evidence="4">
    <location>
        <begin position="306"/>
        <end position="321"/>
    </location>
</feature>
<feature type="compositionally biased region" description="Pro residues" evidence="4">
    <location>
        <begin position="330"/>
        <end position="347"/>
    </location>
</feature>
<feature type="compositionally biased region" description="Polar residues" evidence="4">
    <location>
        <begin position="386"/>
        <end position="395"/>
    </location>
</feature>
<feature type="compositionally biased region" description="Low complexity" evidence="4">
    <location>
        <begin position="422"/>
        <end position="433"/>
    </location>
</feature>
<feature type="compositionally biased region" description="Pro residues" evidence="4">
    <location>
        <begin position="434"/>
        <end position="448"/>
    </location>
</feature>
<feature type="compositionally biased region" description="Basic and acidic residues" evidence="4">
    <location>
        <begin position="494"/>
        <end position="516"/>
    </location>
</feature>
<comment type="function">
    <text evidence="2 5">Component of the velvet transcription factor complex that controls sexual/asexual developmental ratio in response to light, promoting sexual development in the darkness while stimulating asexual sporulation under illumination (By similarity). The velvet complex hat acts as a global regulator for secondary metabolite gene expression (By similarity). Regulates cleistothecial formation and hyphal growth (PubMed:22841690). Acts as a positive regulator of virulence (PubMed:22841690).</text>
</comment>
<comment type="subunit">
    <text evidence="1">Component of the heterotrimeric velvet complex composed of LAE1, VEA1 and VEL2; VEA1 acting as a bridging protein between LAE1 and VEL2 (By similarity).</text>
</comment>
<comment type="subcellular location">
    <subcellularLocation>
        <location evidence="2">Nucleus</location>
    </subcellularLocation>
    <subcellularLocation>
        <location evidence="2">Cytoplasm</location>
    </subcellularLocation>
    <text evidence="2">Enriched in the nucleus in the dark (By similarity).</text>
</comment>
<comment type="domain">
    <text evidence="2">The C-terminal PEST domain is a region rich in proline, glutamic acid, serine and threonine residues that is required for the light-dependent regulation of development and secondary metabolism (By similarity).</text>
</comment>
<comment type="disruption phenotype">
    <text evidence="5">Abolishes cleistothecial formation, switches to mycelial phase faster, and shows impaired switching to the yeast phase once in mycelial phase (PubMed:22841690). Attenuates virulence in mice and macrophages (PubMed:22841690).</text>
</comment>
<comment type="similarity">
    <text evidence="7">Belongs to the velvet family. VeA subfamily.</text>
</comment>
<gene>
    <name evidence="6" type="primary">VEA1</name>
</gene>